<evidence type="ECO:0000255" key="1">
    <source>
        <dbReference type="HAMAP-Rule" id="MF_00223"/>
    </source>
</evidence>
<feature type="chain" id="PRO_1000100203" description="GTP cyclohydrolase 1">
    <location>
        <begin position="1"/>
        <end position="194"/>
    </location>
</feature>
<feature type="binding site" evidence="1">
    <location>
        <position position="83"/>
    </location>
    <ligand>
        <name>Zn(2+)</name>
        <dbReference type="ChEBI" id="CHEBI:29105"/>
    </ligand>
</feature>
<feature type="binding site" evidence="1">
    <location>
        <position position="86"/>
    </location>
    <ligand>
        <name>Zn(2+)</name>
        <dbReference type="ChEBI" id="CHEBI:29105"/>
    </ligand>
</feature>
<feature type="binding site" evidence="1">
    <location>
        <position position="155"/>
    </location>
    <ligand>
        <name>Zn(2+)</name>
        <dbReference type="ChEBI" id="CHEBI:29105"/>
    </ligand>
</feature>
<organism>
    <name type="scientific">Streptococcus pyogenes serotype M49 (strain NZ131)</name>
    <dbReference type="NCBI Taxonomy" id="471876"/>
    <lineage>
        <taxon>Bacteria</taxon>
        <taxon>Bacillati</taxon>
        <taxon>Bacillota</taxon>
        <taxon>Bacilli</taxon>
        <taxon>Lactobacillales</taxon>
        <taxon>Streptococcaceae</taxon>
        <taxon>Streptococcus</taxon>
    </lineage>
</organism>
<keyword id="KW-0342">GTP-binding</keyword>
<keyword id="KW-0378">Hydrolase</keyword>
<keyword id="KW-0479">Metal-binding</keyword>
<keyword id="KW-0547">Nucleotide-binding</keyword>
<keyword id="KW-0554">One-carbon metabolism</keyword>
<keyword id="KW-0862">Zinc</keyword>
<dbReference type="EC" id="3.5.4.16" evidence="1"/>
<dbReference type="EMBL" id="CP000829">
    <property type="protein sequence ID" value="ACI61160.1"/>
    <property type="molecule type" value="Genomic_DNA"/>
</dbReference>
<dbReference type="SMR" id="B5XLE8"/>
<dbReference type="KEGG" id="soz:Spy49_0852"/>
<dbReference type="HOGENOM" id="CLU_049768_3_3_9"/>
<dbReference type="UniPathway" id="UPA00848">
    <property type="reaction ID" value="UER00151"/>
</dbReference>
<dbReference type="Proteomes" id="UP000001039">
    <property type="component" value="Chromosome"/>
</dbReference>
<dbReference type="GO" id="GO:0005737">
    <property type="term" value="C:cytoplasm"/>
    <property type="evidence" value="ECO:0007669"/>
    <property type="project" value="TreeGrafter"/>
</dbReference>
<dbReference type="GO" id="GO:0005525">
    <property type="term" value="F:GTP binding"/>
    <property type="evidence" value="ECO:0007669"/>
    <property type="project" value="UniProtKB-KW"/>
</dbReference>
<dbReference type="GO" id="GO:0003934">
    <property type="term" value="F:GTP cyclohydrolase I activity"/>
    <property type="evidence" value="ECO:0007669"/>
    <property type="project" value="UniProtKB-UniRule"/>
</dbReference>
<dbReference type="GO" id="GO:0008270">
    <property type="term" value="F:zinc ion binding"/>
    <property type="evidence" value="ECO:0007669"/>
    <property type="project" value="UniProtKB-UniRule"/>
</dbReference>
<dbReference type="GO" id="GO:0006730">
    <property type="term" value="P:one-carbon metabolic process"/>
    <property type="evidence" value="ECO:0007669"/>
    <property type="project" value="UniProtKB-UniRule"/>
</dbReference>
<dbReference type="GO" id="GO:0006729">
    <property type="term" value="P:tetrahydrobiopterin biosynthetic process"/>
    <property type="evidence" value="ECO:0007669"/>
    <property type="project" value="TreeGrafter"/>
</dbReference>
<dbReference type="GO" id="GO:0046654">
    <property type="term" value="P:tetrahydrofolate biosynthetic process"/>
    <property type="evidence" value="ECO:0007669"/>
    <property type="project" value="UniProtKB-UniRule"/>
</dbReference>
<dbReference type="FunFam" id="1.10.286.10:FF:000001">
    <property type="entry name" value="GTP cyclohydrolase 1"/>
    <property type="match status" value="1"/>
</dbReference>
<dbReference type="FunFam" id="3.30.1130.10:FF:000001">
    <property type="entry name" value="GTP cyclohydrolase 1"/>
    <property type="match status" value="1"/>
</dbReference>
<dbReference type="Gene3D" id="1.10.286.10">
    <property type="match status" value="1"/>
</dbReference>
<dbReference type="Gene3D" id="3.30.1130.10">
    <property type="match status" value="1"/>
</dbReference>
<dbReference type="HAMAP" id="MF_00223">
    <property type="entry name" value="FolE"/>
    <property type="match status" value="1"/>
</dbReference>
<dbReference type="InterPro" id="IPR043133">
    <property type="entry name" value="GTP-CH-I_C/QueF"/>
</dbReference>
<dbReference type="InterPro" id="IPR043134">
    <property type="entry name" value="GTP-CH-I_N"/>
</dbReference>
<dbReference type="InterPro" id="IPR001474">
    <property type="entry name" value="GTP_CycHdrlase_I"/>
</dbReference>
<dbReference type="InterPro" id="IPR018234">
    <property type="entry name" value="GTP_CycHdrlase_I_CS"/>
</dbReference>
<dbReference type="InterPro" id="IPR020602">
    <property type="entry name" value="GTP_CycHdrlase_I_dom"/>
</dbReference>
<dbReference type="NCBIfam" id="TIGR00063">
    <property type="entry name" value="folE"/>
    <property type="match status" value="1"/>
</dbReference>
<dbReference type="NCBIfam" id="NF006825">
    <property type="entry name" value="PRK09347.1-2"/>
    <property type="match status" value="1"/>
</dbReference>
<dbReference type="NCBIfam" id="NF006826">
    <property type="entry name" value="PRK09347.1-3"/>
    <property type="match status" value="1"/>
</dbReference>
<dbReference type="PANTHER" id="PTHR11109:SF7">
    <property type="entry name" value="GTP CYCLOHYDROLASE 1"/>
    <property type="match status" value="1"/>
</dbReference>
<dbReference type="PANTHER" id="PTHR11109">
    <property type="entry name" value="GTP CYCLOHYDROLASE I"/>
    <property type="match status" value="1"/>
</dbReference>
<dbReference type="Pfam" id="PF01227">
    <property type="entry name" value="GTP_cyclohydroI"/>
    <property type="match status" value="1"/>
</dbReference>
<dbReference type="SUPFAM" id="SSF55620">
    <property type="entry name" value="Tetrahydrobiopterin biosynthesis enzymes-like"/>
    <property type="match status" value="1"/>
</dbReference>
<dbReference type="PROSITE" id="PS00859">
    <property type="entry name" value="GTP_CYCLOHYDROL_1_1"/>
    <property type="match status" value="1"/>
</dbReference>
<dbReference type="PROSITE" id="PS00860">
    <property type="entry name" value="GTP_CYCLOHYDROL_1_2"/>
    <property type="match status" value="1"/>
</dbReference>
<gene>
    <name evidence="1" type="primary">folE</name>
    <name type="ordered locus">Spy49_0852</name>
</gene>
<reference key="1">
    <citation type="journal article" date="2008" name="J. Bacteriol.">
        <title>Genome sequence of a nephritogenic and highly transformable M49 strain of Streptococcus pyogenes.</title>
        <authorList>
            <person name="McShan W.M."/>
            <person name="Ferretti J.J."/>
            <person name="Karasawa T."/>
            <person name="Suvorov A.N."/>
            <person name="Lin S."/>
            <person name="Qin B."/>
            <person name="Jia H."/>
            <person name="Kenton S."/>
            <person name="Najar F."/>
            <person name="Wu H."/>
            <person name="Scott J."/>
            <person name="Roe B.A."/>
            <person name="Savic D.J."/>
        </authorList>
    </citation>
    <scope>NUCLEOTIDE SEQUENCE [LARGE SCALE GENOMIC DNA]</scope>
    <source>
        <strain>NZ131</strain>
    </source>
</reference>
<name>GCH1_STRPZ</name>
<comment type="catalytic activity">
    <reaction evidence="1">
        <text>GTP + H2O = 7,8-dihydroneopterin 3'-triphosphate + formate + H(+)</text>
        <dbReference type="Rhea" id="RHEA:17473"/>
        <dbReference type="ChEBI" id="CHEBI:15377"/>
        <dbReference type="ChEBI" id="CHEBI:15378"/>
        <dbReference type="ChEBI" id="CHEBI:15740"/>
        <dbReference type="ChEBI" id="CHEBI:37565"/>
        <dbReference type="ChEBI" id="CHEBI:58462"/>
        <dbReference type="EC" id="3.5.4.16"/>
    </reaction>
</comment>
<comment type="pathway">
    <text evidence="1">Cofactor biosynthesis; 7,8-dihydroneopterin triphosphate biosynthesis; 7,8-dihydroneopterin triphosphate from GTP: step 1/1.</text>
</comment>
<comment type="subunit">
    <text evidence="1">Homomer.</text>
</comment>
<comment type="similarity">
    <text evidence="1">Belongs to the GTP cyclohydrolase I family.</text>
</comment>
<proteinExistence type="inferred from homology"/>
<sequence length="194" mass="21785">MKKERLMSINKEKAEAAIYQFLEAIGENPNREGLLDTPKRVAKMYAEMFLGLGKDPKEEFTAVFKEQHEDVVIVKGISFYSICEHHLVPFYGKAHIAYLPSDGRVTGLSKLARAVEVASKRPQLQERLTSQIADALVEALNPKGTLVMVEAEHMCMTMRGIKKPGSKTITTTARGLYKESRAERQEVISLMTKD</sequence>
<protein>
    <recommendedName>
        <fullName evidence="1">GTP cyclohydrolase 1</fullName>
        <ecNumber evidence="1">3.5.4.16</ecNumber>
    </recommendedName>
    <alternativeName>
        <fullName evidence="1">GTP cyclohydrolase I</fullName>
        <shortName evidence="1">GTP-CH-I</shortName>
    </alternativeName>
</protein>
<accession>B5XLE8</accession>